<feature type="chain" id="PRO_1000056036" description="Large ribosomal subunit protein uL30">
    <location>
        <begin position="1"/>
        <end position="56"/>
    </location>
</feature>
<evidence type="ECO:0000255" key="1">
    <source>
        <dbReference type="HAMAP-Rule" id="MF_01371"/>
    </source>
</evidence>
<evidence type="ECO:0000305" key="2"/>
<protein>
    <recommendedName>
        <fullName evidence="1">Large ribosomal subunit protein uL30</fullName>
    </recommendedName>
    <alternativeName>
        <fullName evidence="2">50S ribosomal protein L30</fullName>
    </alternativeName>
</protein>
<gene>
    <name evidence="1" type="primary">rpmD</name>
    <name type="ordered locus">Dvul_1747</name>
</gene>
<sequence>MIKVKLVRSLICCNPTQRATVAALGLRKVGSEKTFKDDAAIRGMINKVKHLIEVSE</sequence>
<organism>
    <name type="scientific">Nitratidesulfovibrio vulgaris (strain DP4)</name>
    <name type="common">Desulfovibrio vulgaris</name>
    <dbReference type="NCBI Taxonomy" id="391774"/>
    <lineage>
        <taxon>Bacteria</taxon>
        <taxon>Pseudomonadati</taxon>
        <taxon>Thermodesulfobacteriota</taxon>
        <taxon>Desulfovibrionia</taxon>
        <taxon>Desulfovibrionales</taxon>
        <taxon>Desulfovibrionaceae</taxon>
        <taxon>Nitratidesulfovibrio</taxon>
    </lineage>
</organism>
<dbReference type="EMBL" id="CP000527">
    <property type="protein sequence ID" value="ABM28764.1"/>
    <property type="molecule type" value="Genomic_DNA"/>
</dbReference>
<dbReference type="RefSeq" id="WP_010938616.1">
    <property type="nucleotide sequence ID" value="NC_008751.1"/>
</dbReference>
<dbReference type="SMR" id="A1VE98"/>
<dbReference type="KEGG" id="dvl:Dvul_1747"/>
<dbReference type="HOGENOM" id="CLU_131047_1_3_7"/>
<dbReference type="Proteomes" id="UP000009173">
    <property type="component" value="Chromosome"/>
</dbReference>
<dbReference type="GO" id="GO:0015934">
    <property type="term" value="C:large ribosomal subunit"/>
    <property type="evidence" value="ECO:0007669"/>
    <property type="project" value="InterPro"/>
</dbReference>
<dbReference type="GO" id="GO:0003735">
    <property type="term" value="F:structural constituent of ribosome"/>
    <property type="evidence" value="ECO:0007669"/>
    <property type="project" value="InterPro"/>
</dbReference>
<dbReference type="GO" id="GO:0006412">
    <property type="term" value="P:translation"/>
    <property type="evidence" value="ECO:0007669"/>
    <property type="project" value="InterPro"/>
</dbReference>
<dbReference type="CDD" id="cd01658">
    <property type="entry name" value="Ribosomal_L30"/>
    <property type="match status" value="1"/>
</dbReference>
<dbReference type="Gene3D" id="3.30.1390.20">
    <property type="entry name" value="Ribosomal protein L30, ferredoxin-like fold domain"/>
    <property type="match status" value="1"/>
</dbReference>
<dbReference type="HAMAP" id="MF_01371_B">
    <property type="entry name" value="Ribosomal_uL30_B"/>
    <property type="match status" value="1"/>
</dbReference>
<dbReference type="InterPro" id="IPR036919">
    <property type="entry name" value="Ribo_uL30_ferredoxin-like_sf"/>
</dbReference>
<dbReference type="InterPro" id="IPR005996">
    <property type="entry name" value="Ribosomal_uL30_bac-type"/>
</dbReference>
<dbReference type="InterPro" id="IPR016082">
    <property type="entry name" value="Ribosomal_uL30_ferredoxin-like"/>
</dbReference>
<dbReference type="NCBIfam" id="TIGR01308">
    <property type="entry name" value="rpmD_bact"/>
    <property type="match status" value="1"/>
</dbReference>
<dbReference type="Pfam" id="PF00327">
    <property type="entry name" value="Ribosomal_L30"/>
    <property type="match status" value="1"/>
</dbReference>
<dbReference type="PIRSF" id="PIRSF002211">
    <property type="entry name" value="Ribosomal_L30_bac-type"/>
    <property type="match status" value="1"/>
</dbReference>
<dbReference type="SUPFAM" id="SSF55129">
    <property type="entry name" value="Ribosomal protein L30p/L7e"/>
    <property type="match status" value="1"/>
</dbReference>
<name>RL30_NITV4</name>
<proteinExistence type="inferred from homology"/>
<comment type="subunit">
    <text evidence="1">Part of the 50S ribosomal subunit.</text>
</comment>
<comment type="similarity">
    <text evidence="1">Belongs to the universal ribosomal protein uL30 family.</text>
</comment>
<accession>A1VE98</accession>
<reference key="1">
    <citation type="journal article" date="2009" name="Environ. Microbiol.">
        <title>Contribution of mobile genetic elements to Desulfovibrio vulgaris genome plasticity.</title>
        <authorList>
            <person name="Walker C.B."/>
            <person name="Stolyar S."/>
            <person name="Chivian D."/>
            <person name="Pinel N."/>
            <person name="Gabster J.A."/>
            <person name="Dehal P.S."/>
            <person name="He Z."/>
            <person name="Yang Z.K."/>
            <person name="Yen H.C."/>
            <person name="Zhou J."/>
            <person name="Wall J.D."/>
            <person name="Hazen T.C."/>
            <person name="Arkin A.P."/>
            <person name="Stahl D.A."/>
        </authorList>
    </citation>
    <scope>NUCLEOTIDE SEQUENCE [LARGE SCALE GENOMIC DNA]</scope>
    <source>
        <strain>DP4</strain>
    </source>
</reference>
<keyword id="KW-0687">Ribonucleoprotein</keyword>
<keyword id="KW-0689">Ribosomal protein</keyword>